<dbReference type="EC" id="1.1.1.37" evidence="1"/>
<dbReference type="EMBL" id="CP000361">
    <property type="protein sequence ID" value="ABV67572.1"/>
    <property type="molecule type" value="Genomic_DNA"/>
</dbReference>
<dbReference type="RefSeq" id="WP_012012982.1">
    <property type="nucleotide sequence ID" value="NC_009850.1"/>
</dbReference>
<dbReference type="SMR" id="A8EUE8"/>
<dbReference type="STRING" id="367737.Abu_1315"/>
<dbReference type="GeneID" id="24303636"/>
<dbReference type="KEGG" id="abu:Abu_1315"/>
<dbReference type="eggNOG" id="COG0039">
    <property type="taxonomic scope" value="Bacteria"/>
</dbReference>
<dbReference type="HOGENOM" id="CLU_045401_2_1_7"/>
<dbReference type="Proteomes" id="UP000001136">
    <property type="component" value="Chromosome"/>
</dbReference>
<dbReference type="GO" id="GO:0005737">
    <property type="term" value="C:cytoplasm"/>
    <property type="evidence" value="ECO:0007669"/>
    <property type="project" value="TreeGrafter"/>
</dbReference>
<dbReference type="GO" id="GO:0030060">
    <property type="term" value="F:L-malate dehydrogenase (NAD+) activity"/>
    <property type="evidence" value="ECO:0007669"/>
    <property type="project" value="UniProtKB-EC"/>
</dbReference>
<dbReference type="GO" id="GO:0019752">
    <property type="term" value="P:carboxylic acid metabolic process"/>
    <property type="evidence" value="ECO:0007669"/>
    <property type="project" value="InterPro"/>
</dbReference>
<dbReference type="GO" id="GO:0006099">
    <property type="term" value="P:tricarboxylic acid cycle"/>
    <property type="evidence" value="ECO:0007669"/>
    <property type="project" value="UniProtKB-KW"/>
</dbReference>
<dbReference type="CDD" id="cd01339">
    <property type="entry name" value="LDH-like_MDH"/>
    <property type="match status" value="1"/>
</dbReference>
<dbReference type="FunFam" id="3.90.110.10:FF:000004">
    <property type="entry name" value="Malate dehydrogenase"/>
    <property type="match status" value="1"/>
</dbReference>
<dbReference type="Gene3D" id="3.90.110.10">
    <property type="entry name" value="Lactate dehydrogenase/glycoside hydrolase, family 4, C-terminal"/>
    <property type="match status" value="1"/>
</dbReference>
<dbReference type="Gene3D" id="3.40.50.720">
    <property type="entry name" value="NAD(P)-binding Rossmann-like Domain"/>
    <property type="match status" value="1"/>
</dbReference>
<dbReference type="InterPro" id="IPR001557">
    <property type="entry name" value="L-lactate/malate_DH"/>
</dbReference>
<dbReference type="InterPro" id="IPR022383">
    <property type="entry name" value="Lactate/malate_DH_C"/>
</dbReference>
<dbReference type="InterPro" id="IPR001236">
    <property type="entry name" value="Lactate/malate_DH_N"/>
</dbReference>
<dbReference type="InterPro" id="IPR015955">
    <property type="entry name" value="Lactate_DH/Glyco_Ohase_4_C"/>
</dbReference>
<dbReference type="InterPro" id="IPR011275">
    <property type="entry name" value="Malate_DH_type3"/>
</dbReference>
<dbReference type="InterPro" id="IPR036291">
    <property type="entry name" value="NAD(P)-bd_dom_sf"/>
</dbReference>
<dbReference type="NCBIfam" id="NF004863">
    <property type="entry name" value="PRK06223.1"/>
    <property type="match status" value="1"/>
</dbReference>
<dbReference type="PANTHER" id="PTHR11540">
    <property type="entry name" value="MALATE AND LACTATE DEHYDROGENASE"/>
    <property type="match status" value="1"/>
</dbReference>
<dbReference type="PANTHER" id="PTHR11540:SF16">
    <property type="entry name" value="MALATE DEHYDROGENASE, MITOCHONDRIAL"/>
    <property type="match status" value="1"/>
</dbReference>
<dbReference type="Pfam" id="PF02866">
    <property type="entry name" value="Ldh_1_C"/>
    <property type="match status" value="1"/>
</dbReference>
<dbReference type="Pfam" id="PF00056">
    <property type="entry name" value="Ldh_1_N"/>
    <property type="match status" value="1"/>
</dbReference>
<dbReference type="PIRSF" id="PIRSF000102">
    <property type="entry name" value="Lac_mal_DH"/>
    <property type="match status" value="1"/>
</dbReference>
<dbReference type="PRINTS" id="PR00086">
    <property type="entry name" value="LLDHDRGNASE"/>
</dbReference>
<dbReference type="SUPFAM" id="SSF56327">
    <property type="entry name" value="LDH C-terminal domain-like"/>
    <property type="match status" value="1"/>
</dbReference>
<dbReference type="SUPFAM" id="SSF51735">
    <property type="entry name" value="NAD(P)-binding Rossmann-fold domains"/>
    <property type="match status" value="1"/>
</dbReference>
<name>MDH_ALIB4</name>
<gene>
    <name evidence="1" type="primary">mdh</name>
    <name type="ordered locus">Abu_1315</name>
</gene>
<proteinExistence type="inferred from homology"/>
<protein>
    <recommendedName>
        <fullName evidence="1">Malate dehydrogenase</fullName>
        <ecNumber evidence="1">1.1.1.37</ecNumber>
    </recommendedName>
</protein>
<accession>A8EUE8</accession>
<feature type="chain" id="PRO_1000191639" description="Malate dehydrogenase">
    <location>
        <begin position="1"/>
        <end position="314"/>
    </location>
</feature>
<feature type="active site" description="Proton acceptor" evidence="1">
    <location>
        <position position="177"/>
    </location>
</feature>
<feature type="binding site" evidence="1">
    <location>
        <begin position="9"/>
        <end position="15"/>
    </location>
    <ligand>
        <name>NAD(+)</name>
        <dbReference type="ChEBI" id="CHEBI:57540"/>
    </ligand>
</feature>
<feature type="binding site" evidence="1">
    <location>
        <position position="84"/>
    </location>
    <ligand>
        <name>substrate</name>
    </ligand>
</feature>
<feature type="binding site" evidence="1">
    <location>
        <position position="90"/>
    </location>
    <ligand>
        <name>substrate</name>
    </ligand>
</feature>
<feature type="binding site" evidence="1">
    <location>
        <position position="97"/>
    </location>
    <ligand>
        <name>NAD(+)</name>
        <dbReference type="ChEBI" id="CHEBI:57540"/>
    </ligand>
</feature>
<feature type="binding site" evidence="1">
    <location>
        <begin position="120"/>
        <end position="122"/>
    </location>
    <ligand>
        <name>NAD(+)</name>
        <dbReference type="ChEBI" id="CHEBI:57540"/>
    </ligand>
</feature>
<feature type="binding site" evidence="1">
    <location>
        <position position="122"/>
    </location>
    <ligand>
        <name>substrate</name>
    </ligand>
</feature>
<feature type="binding site" evidence="1">
    <location>
        <position position="153"/>
    </location>
    <ligand>
        <name>substrate</name>
    </ligand>
</feature>
<comment type="function">
    <text evidence="1">Catalyzes the reversible oxidation of malate to oxaloacetate.</text>
</comment>
<comment type="catalytic activity">
    <reaction evidence="1">
        <text>(S)-malate + NAD(+) = oxaloacetate + NADH + H(+)</text>
        <dbReference type="Rhea" id="RHEA:21432"/>
        <dbReference type="ChEBI" id="CHEBI:15378"/>
        <dbReference type="ChEBI" id="CHEBI:15589"/>
        <dbReference type="ChEBI" id="CHEBI:16452"/>
        <dbReference type="ChEBI" id="CHEBI:57540"/>
        <dbReference type="ChEBI" id="CHEBI:57945"/>
        <dbReference type="EC" id="1.1.1.37"/>
    </reaction>
</comment>
<comment type="similarity">
    <text evidence="2">Belongs to the LDH/MDH superfamily.</text>
</comment>
<reference key="1">
    <citation type="journal article" date="2007" name="PLoS ONE">
        <title>The complete genome sequence and analysis of the Epsilonproteobacterium Arcobacter butzleri.</title>
        <authorList>
            <person name="Miller W.G."/>
            <person name="Parker C.T."/>
            <person name="Rubenfield M."/>
            <person name="Mendz G.L."/>
            <person name="Woesten M.M.S.M."/>
            <person name="Ussery D.W."/>
            <person name="Stolz J.F."/>
            <person name="Binnewies T.T."/>
            <person name="Hallin P.F."/>
            <person name="Wang G."/>
            <person name="Malek J.A."/>
            <person name="Rogosin A."/>
            <person name="Stanker L.H."/>
            <person name="Mandrell R.E."/>
        </authorList>
    </citation>
    <scope>NUCLEOTIDE SEQUENCE [LARGE SCALE GENOMIC DNA]</scope>
    <source>
        <strain>RM4018</strain>
    </source>
</reference>
<sequence length="314" mass="33995">MNNKTIGIIGVGNVGSTLAFILATNNICSNILLKDIKNNISEAMALDISQAMQETNSNTKITACLNNEDFKDCDIIIITAGIARKPNMSRDDLLITNAKIVASVMNDISKNNPNAIIIIISNPLDSMVYTALKSSNYPKNKILGMAGTLDSARMSYFIAEKLGFPNVNIKTSVIGGHGDSMVPLIDFSTVDGKKLNEVLSKEDIDDIVIKTKNGGGQIVKLLETGSAYYAPAYSTIAMIEAILNDTKKCFACATILNGEYGYKDIVSGVPVILGKDGVEKIIELEISDFEKEQFSNSINSVKESINILENNFFN</sequence>
<keyword id="KW-0520">NAD</keyword>
<keyword id="KW-0560">Oxidoreductase</keyword>
<keyword id="KW-1185">Reference proteome</keyword>
<keyword id="KW-0816">Tricarboxylic acid cycle</keyword>
<evidence type="ECO:0000250" key="1">
    <source>
        <dbReference type="UniProtKB" id="P61889"/>
    </source>
</evidence>
<evidence type="ECO:0000305" key="2"/>
<organism>
    <name type="scientific">Aliarcobacter butzleri (strain RM4018)</name>
    <name type="common">Arcobacter butzleri</name>
    <dbReference type="NCBI Taxonomy" id="367737"/>
    <lineage>
        <taxon>Bacteria</taxon>
        <taxon>Pseudomonadati</taxon>
        <taxon>Campylobacterota</taxon>
        <taxon>Epsilonproteobacteria</taxon>
        <taxon>Campylobacterales</taxon>
        <taxon>Arcobacteraceae</taxon>
        <taxon>Aliarcobacter</taxon>
    </lineage>
</organism>